<accession>Q8Z3X3</accession>
<feature type="chain" id="PRO_0000214605" description="N(4)-acetylcytidine amidohydrolase">
    <location>
        <begin position="1"/>
        <end position="103"/>
    </location>
</feature>
<feature type="domain" description="ASCH" evidence="1">
    <location>
        <begin position="6"/>
        <end position="94"/>
    </location>
</feature>
<feature type="active site" description="Proton acceptor" evidence="2">
    <location>
        <position position="21"/>
    </location>
</feature>
<feature type="active site" description="Nucleophile" evidence="2">
    <location>
        <position position="24"/>
    </location>
</feature>
<feature type="active site" description="Proton donor" evidence="2">
    <location>
        <position position="74"/>
    </location>
</feature>
<protein>
    <recommendedName>
        <fullName evidence="2">N(4)-acetylcytidine amidohydrolase</fullName>
        <shortName evidence="2">ac4C amidohydrolase</shortName>
        <ecNumber evidence="2">3.5.1.135</ecNumber>
    </recommendedName>
</protein>
<comment type="function">
    <text evidence="2">Catalyzes the hydrolysis of N(4)-acetylcytidine (ac4C).</text>
</comment>
<comment type="catalytic activity">
    <reaction evidence="2">
        <text>N(4)-acetylcytidine + H2O = cytidine + acetate + H(+)</text>
        <dbReference type="Rhea" id="RHEA:62932"/>
        <dbReference type="ChEBI" id="CHEBI:15377"/>
        <dbReference type="ChEBI" id="CHEBI:15378"/>
        <dbReference type="ChEBI" id="CHEBI:17562"/>
        <dbReference type="ChEBI" id="CHEBI:30089"/>
        <dbReference type="ChEBI" id="CHEBI:70989"/>
        <dbReference type="EC" id="3.5.1.135"/>
    </reaction>
</comment>
<comment type="catalytic activity">
    <reaction evidence="2">
        <text>N(4)-acetyl-2'-deoxycytidine + H2O = 2'-deoxycytidine + acetate + H(+)</text>
        <dbReference type="Rhea" id="RHEA:62936"/>
        <dbReference type="ChEBI" id="CHEBI:15377"/>
        <dbReference type="ChEBI" id="CHEBI:15378"/>
        <dbReference type="ChEBI" id="CHEBI:15698"/>
        <dbReference type="ChEBI" id="CHEBI:30089"/>
        <dbReference type="ChEBI" id="CHEBI:146133"/>
        <dbReference type="EC" id="3.5.1.135"/>
    </reaction>
</comment>
<comment type="catalytic activity">
    <reaction evidence="2">
        <text>N(4)-acetylcytosine + H2O = cytosine + acetate + H(+)</text>
        <dbReference type="Rhea" id="RHEA:62940"/>
        <dbReference type="ChEBI" id="CHEBI:15377"/>
        <dbReference type="ChEBI" id="CHEBI:15378"/>
        <dbReference type="ChEBI" id="CHEBI:16040"/>
        <dbReference type="ChEBI" id="CHEBI:30089"/>
        <dbReference type="ChEBI" id="CHEBI:146134"/>
        <dbReference type="EC" id="3.5.1.135"/>
    </reaction>
</comment>
<comment type="similarity">
    <text evidence="2">Belongs to the N(4)-acetylcytidine amidohydrolase family.</text>
</comment>
<reference key="1">
    <citation type="journal article" date="2001" name="Nature">
        <title>Complete genome sequence of a multiple drug resistant Salmonella enterica serovar Typhi CT18.</title>
        <authorList>
            <person name="Parkhill J."/>
            <person name="Dougan G."/>
            <person name="James K.D."/>
            <person name="Thomson N.R."/>
            <person name="Pickard D."/>
            <person name="Wain J."/>
            <person name="Churcher C.M."/>
            <person name="Mungall K.L."/>
            <person name="Bentley S.D."/>
            <person name="Holden M.T.G."/>
            <person name="Sebaihia M."/>
            <person name="Baker S."/>
            <person name="Basham D."/>
            <person name="Brooks K."/>
            <person name="Chillingworth T."/>
            <person name="Connerton P."/>
            <person name="Cronin A."/>
            <person name="Davis P."/>
            <person name="Davies R.M."/>
            <person name="Dowd L."/>
            <person name="White N."/>
            <person name="Farrar J."/>
            <person name="Feltwell T."/>
            <person name="Hamlin N."/>
            <person name="Haque A."/>
            <person name="Hien T.T."/>
            <person name="Holroyd S."/>
            <person name="Jagels K."/>
            <person name="Krogh A."/>
            <person name="Larsen T.S."/>
            <person name="Leather S."/>
            <person name="Moule S."/>
            <person name="O'Gaora P."/>
            <person name="Parry C."/>
            <person name="Quail M.A."/>
            <person name="Rutherford K.M."/>
            <person name="Simmonds M."/>
            <person name="Skelton J."/>
            <person name="Stevens K."/>
            <person name="Whitehead S."/>
            <person name="Barrell B.G."/>
        </authorList>
    </citation>
    <scope>NUCLEOTIDE SEQUENCE [LARGE SCALE GENOMIC DNA]</scope>
    <source>
        <strain>CT18</strain>
    </source>
</reference>
<reference key="2">
    <citation type="journal article" date="2003" name="J. Bacteriol.">
        <title>Comparative genomics of Salmonella enterica serovar Typhi strains Ty2 and CT18.</title>
        <authorList>
            <person name="Deng W."/>
            <person name="Liou S.-R."/>
            <person name="Plunkett G. III"/>
            <person name="Mayhew G.F."/>
            <person name="Rose D.J."/>
            <person name="Burland V."/>
            <person name="Kodoyianni V."/>
            <person name="Schwartz D.C."/>
            <person name="Blattner F.R."/>
        </authorList>
    </citation>
    <scope>NUCLEOTIDE SEQUENCE [LARGE SCALE GENOMIC DNA]</scope>
    <source>
        <strain>ATCC 700931 / Ty2</strain>
    </source>
</reference>
<proteinExistence type="inferred from homology"/>
<organism>
    <name type="scientific">Salmonella typhi</name>
    <dbReference type="NCBI Taxonomy" id="90370"/>
    <lineage>
        <taxon>Bacteria</taxon>
        <taxon>Pseudomonadati</taxon>
        <taxon>Pseudomonadota</taxon>
        <taxon>Gammaproteobacteria</taxon>
        <taxon>Enterobacterales</taxon>
        <taxon>Enterobacteriaceae</taxon>
        <taxon>Salmonella</taxon>
    </lineage>
</organism>
<sequence>MQPNDITFFQRFQNDILAGRKTITIRDASESHFKAGDALRVGRFEDDGYFCTIEVTGTSTVTLDTLNEKHAQQENMSLDELKRVIAEIYPNQTQFYVIDFKCL</sequence>
<dbReference type="EC" id="3.5.1.135" evidence="2"/>
<dbReference type="EMBL" id="AL513382">
    <property type="protein sequence ID" value="CAD02880.1"/>
    <property type="molecule type" value="Genomic_DNA"/>
</dbReference>
<dbReference type="EMBL" id="AE014613">
    <property type="protein sequence ID" value="AAO70520.1"/>
    <property type="molecule type" value="Genomic_DNA"/>
</dbReference>
<dbReference type="RefSeq" id="NP_457448.1">
    <property type="nucleotide sequence ID" value="NC_003198.1"/>
</dbReference>
<dbReference type="RefSeq" id="WP_001182971.1">
    <property type="nucleotide sequence ID" value="NZ_WSUR01000024.1"/>
</dbReference>
<dbReference type="SMR" id="Q8Z3X3"/>
<dbReference type="STRING" id="220341.gene:17587081"/>
<dbReference type="KEGG" id="stt:t2968"/>
<dbReference type="KEGG" id="sty:STY3206"/>
<dbReference type="PATRIC" id="fig|220341.7.peg.3265"/>
<dbReference type="eggNOG" id="COG3097">
    <property type="taxonomic scope" value="Bacteria"/>
</dbReference>
<dbReference type="HOGENOM" id="CLU_152586_0_0_6"/>
<dbReference type="OMA" id="HARQENM"/>
<dbReference type="OrthoDB" id="8590202at2"/>
<dbReference type="Proteomes" id="UP000000541">
    <property type="component" value="Chromosome"/>
</dbReference>
<dbReference type="Proteomes" id="UP000002670">
    <property type="component" value="Chromosome"/>
</dbReference>
<dbReference type="GO" id="GO:0005829">
    <property type="term" value="C:cytosol"/>
    <property type="evidence" value="ECO:0007669"/>
    <property type="project" value="TreeGrafter"/>
</dbReference>
<dbReference type="GO" id="GO:0016813">
    <property type="term" value="F:hydrolase activity, acting on carbon-nitrogen (but not peptide) bonds, in linear amidines"/>
    <property type="evidence" value="ECO:0007669"/>
    <property type="project" value="UniProtKB-UniRule"/>
</dbReference>
<dbReference type="GO" id="GO:0106251">
    <property type="term" value="F:N4-acetylcytidine amidohydrolase activity"/>
    <property type="evidence" value="ECO:0007669"/>
    <property type="project" value="RHEA"/>
</dbReference>
<dbReference type="CDD" id="cd06552">
    <property type="entry name" value="ASCH_yqfb_like"/>
    <property type="match status" value="1"/>
</dbReference>
<dbReference type="FunFam" id="2.30.130.30:FF:000001">
    <property type="entry name" value="UPF0267 protein YqfB"/>
    <property type="match status" value="1"/>
</dbReference>
<dbReference type="Gene3D" id="2.30.130.30">
    <property type="entry name" value="Hypothetical protein"/>
    <property type="match status" value="1"/>
</dbReference>
<dbReference type="HAMAP" id="MF_00684">
    <property type="entry name" value="ac4C_amidohydr"/>
    <property type="match status" value="1"/>
</dbReference>
<dbReference type="InterPro" id="IPR008314">
    <property type="entry name" value="AC4CH"/>
</dbReference>
<dbReference type="InterPro" id="IPR007374">
    <property type="entry name" value="ASCH_domain"/>
</dbReference>
<dbReference type="InterPro" id="IPR015947">
    <property type="entry name" value="PUA-like_sf"/>
</dbReference>
<dbReference type="NCBIfam" id="NF003443">
    <property type="entry name" value="PRK04980.1"/>
    <property type="match status" value="1"/>
</dbReference>
<dbReference type="PANTHER" id="PTHR38088">
    <property type="entry name" value="UCP029143 FAMILY PROTEIN"/>
    <property type="match status" value="1"/>
</dbReference>
<dbReference type="PANTHER" id="PTHR38088:SF2">
    <property type="entry name" value="UCP029143 FAMILY PROTEIN"/>
    <property type="match status" value="1"/>
</dbReference>
<dbReference type="Pfam" id="PF04266">
    <property type="entry name" value="ASCH"/>
    <property type="match status" value="1"/>
</dbReference>
<dbReference type="PIRSF" id="PIRSF029143">
    <property type="entry name" value="UCP029143"/>
    <property type="match status" value="1"/>
</dbReference>
<dbReference type="SMART" id="SM01022">
    <property type="entry name" value="ASCH"/>
    <property type="match status" value="1"/>
</dbReference>
<dbReference type="SUPFAM" id="SSF88697">
    <property type="entry name" value="PUA domain-like"/>
    <property type="match status" value="1"/>
</dbReference>
<gene>
    <name type="primary">yqfB</name>
    <name type="ordered locus">STY3206</name>
    <name type="ordered locus">t2968</name>
</gene>
<keyword id="KW-0378">Hydrolase</keyword>
<evidence type="ECO:0000255" key="1"/>
<evidence type="ECO:0000255" key="2">
    <source>
        <dbReference type="HAMAP-Rule" id="MF_00684"/>
    </source>
</evidence>
<name>AC4CH_SALTI</name>